<name>GAG_EIAVY</name>
<comment type="function">
    <text evidence="1">Matrix protein p15 forms the outer shell of the core of the virus, lining the inner surface of the viral membrane.</text>
</comment>
<comment type="function">
    <text evidence="1">Capsid protein p26 forms the conical core of the virus that encapsulates the genomic RNA-nucleocapsid complex.</text>
</comment>
<comment type="function">
    <text evidence="1">Nucleocapsid protein p11 encapsulates and protects viral dimeric unspliced (genomic) RNA. Binds these RNAs through its zinc fingers (By similarity).</text>
</comment>
<comment type="function">
    <text evidence="1">p9 plays a role in budding of the assembled particle by interacting with PDCD6IP/AIP1.</text>
</comment>
<comment type="subunit">
    <molecule>p9</molecule>
    <text evidence="1">Interacts with human PDCD6IP/AIP1.</text>
</comment>
<comment type="subcellular location">
    <subcellularLocation>
        <location evidence="5">Virion</location>
    </subcellularLocation>
</comment>
<comment type="domain">
    <text evidence="1">Late-budding domains (L domains) are short sequence motifs essential for viral particle budding. They recruit proteins of the host ESCRT machinery (Endosomal Sorting Complex Required for Transport) or ESCRT-associated proteins. p9 contains one L domain: a LYPX(n)L motif, which interacts with PDCD6IP/AIP1 (By similarity).</text>
</comment>
<comment type="similarity">
    <text evidence="5">Belongs to the equine lentivirus group gag polyprotein family.</text>
</comment>
<comment type="caution">
    <text evidence="5">The original EMBL accession numbers (M11337 and M14855) assigned to this isolate (isolate Wyoming) have been made secondary to M16575 which is from a different isolate (clone 1365).</text>
</comment>
<sequence>MGDPLTWSKALKKLEKVTVQGSQKLTTGNCNWALSLVDLFHDTNFVKEKDWQLRDVIPLLEDVTQTLSGQEREAFERTWWAISAVKMGLQINNVVDGKASFQLLRAKYEKKTANKKQSEPSEEYPIMIDGAGNRNFRPLTPRGYTTWVNTIQTNGLLNEASQNLFGILSVDCTSEEMNAFLDVVPGQAGQKQILLDAIDKIADDWDNRHPLPNAPLVAPPQGPIPMTARFIRGLGVPRERQMEPAFDQFRQTYRQWIIEAMSEGIKVMIGKPKAQNIRQGAKEPYPEFVDRLLSQIKSEGHPQEISKFLTDTLTIQNANEECRNAMRHLRPEDTLEEKMYACRDIGTTKQKMMLLAKALQTGLAGPFKGGALKGGPLKAAQTCYNCGKPGHLSSQCRAPKVCFKCKQPGHFSKQCRSVPKNGKQGAQGRPQKQTFPIQQKSQHNKSVVQETPQTQNLYPDLSEIKKEYNVKEKDQVEDLNLDSLWE</sequence>
<organism>
    <name type="scientific">Equine infectious anemia virus (strain Wyoming)</name>
    <name type="common">EIAV</name>
    <dbReference type="NCBI Taxonomy" id="11672"/>
    <lineage>
        <taxon>Viruses</taxon>
        <taxon>Riboviria</taxon>
        <taxon>Pararnavirae</taxon>
        <taxon>Artverviricota</taxon>
        <taxon>Revtraviricetes</taxon>
        <taxon>Ortervirales</taxon>
        <taxon>Retroviridae</taxon>
        <taxon>Orthoretrovirinae</taxon>
        <taxon>Lentivirus</taxon>
        <taxon>Equine infectious anemia virus</taxon>
    </lineage>
</organism>
<gene>
    <name type="primary">gag</name>
</gene>
<dbReference type="PIR" id="A03949">
    <property type="entry name" value="FOLJEV"/>
</dbReference>
<dbReference type="PDB" id="1EIA">
    <property type="method" value="X-ray"/>
    <property type="resolution" value="2.70 A"/>
    <property type="chains" value="A=140-346"/>
</dbReference>
<dbReference type="PDB" id="1HEK">
    <property type="method" value="X-ray"/>
    <property type="resolution" value="2.80 A"/>
    <property type="chains" value="A/B=1-124"/>
</dbReference>
<dbReference type="PDB" id="2BL6">
    <property type="method" value="NMR"/>
    <property type="chains" value="A=381-417"/>
</dbReference>
<dbReference type="PDB" id="2EIA">
    <property type="method" value="X-ray"/>
    <property type="resolution" value="2.70 A"/>
    <property type="chains" value="A/B=141-346"/>
</dbReference>
<dbReference type="PDB" id="2K84">
    <property type="method" value="NMR"/>
    <property type="chains" value="A=457-486"/>
</dbReference>
<dbReference type="PDB" id="2R03">
    <property type="method" value="X-ray"/>
    <property type="resolution" value="2.59 A"/>
    <property type="chains" value="B=456-463"/>
</dbReference>
<dbReference type="PDB" id="4ZUT">
    <property type="method" value="X-ray"/>
    <property type="resolution" value="2.60 A"/>
    <property type="chains" value="C=21-32"/>
</dbReference>
<dbReference type="PDB" id="4ZUU">
    <property type="method" value="X-ray"/>
    <property type="resolution" value="2.20 A"/>
    <property type="chains" value="C=172-180"/>
</dbReference>
<dbReference type="PDB" id="4ZUW">
    <property type="method" value="X-ray"/>
    <property type="resolution" value="2.60 A"/>
    <property type="chains" value="C=21-32"/>
</dbReference>
<dbReference type="PDBsum" id="1EIA"/>
<dbReference type="PDBsum" id="1HEK"/>
<dbReference type="PDBsum" id="2BL6"/>
<dbReference type="PDBsum" id="2EIA"/>
<dbReference type="PDBsum" id="2K84"/>
<dbReference type="PDBsum" id="2R03"/>
<dbReference type="PDBsum" id="4ZUT"/>
<dbReference type="PDBsum" id="4ZUU"/>
<dbReference type="PDBsum" id="4ZUW"/>
<dbReference type="BMRB" id="P69732"/>
<dbReference type="SMR" id="P69732"/>
<dbReference type="ELM" id="P69732"/>
<dbReference type="EvolutionaryTrace" id="P69732"/>
<dbReference type="GO" id="GO:0019013">
    <property type="term" value="C:viral nucleocapsid"/>
    <property type="evidence" value="ECO:0007669"/>
    <property type="project" value="UniProtKB-KW"/>
</dbReference>
<dbReference type="GO" id="GO:0003676">
    <property type="term" value="F:nucleic acid binding"/>
    <property type="evidence" value="ECO:0007669"/>
    <property type="project" value="InterPro"/>
</dbReference>
<dbReference type="GO" id="GO:0039660">
    <property type="term" value="F:structural constituent of virion"/>
    <property type="evidence" value="ECO:0007669"/>
    <property type="project" value="UniProtKB-KW"/>
</dbReference>
<dbReference type="GO" id="GO:0008270">
    <property type="term" value="F:zinc ion binding"/>
    <property type="evidence" value="ECO:0007669"/>
    <property type="project" value="UniProtKB-KW"/>
</dbReference>
<dbReference type="GO" id="GO:0039702">
    <property type="term" value="P:viral budding via host ESCRT complex"/>
    <property type="evidence" value="ECO:0007669"/>
    <property type="project" value="UniProtKB-KW"/>
</dbReference>
<dbReference type="Gene3D" id="1.10.1200.30">
    <property type="match status" value="1"/>
</dbReference>
<dbReference type="Gene3D" id="1.10.375.10">
    <property type="entry name" value="Human Immunodeficiency Virus Type 1 Capsid Protein"/>
    <property type="match status" value="1"/>
</dbReference>
<dbReference type="Gene3D" id="1.10.150.90">
    <property type="entry name" value="Immunodeficiency lentiviruses, gag gene matrix protein p17"/>
    <property type="match status" value="1"/>
</dbReference>
<dbReference type="Gene3D" id="4.10.60.10">
    <property type="entry name" value="Zinc finger, CCHC-type"/>
    <property type="match status" value="2"/>
</dbReference>
<dbReference type="InterPro" id="IPR014834">
    <property type="entry name" value="Gag_p15"/>
</dbReference>
<dbReference type="InterPro" id="IPR045345">
    <property type="entry name" value="Gag_p24_C"/>
</dbReference>
<dbReference type="InterPro" id="IPR012344">
    <property type="entry name" value="Matrix_HIV/RSV_N"/>
</dbReference>
<dbReference type="InterPro" id="IPR050195">
    <property type="entry name" value="Primate_lentivir_Gag_pol-like"/>
</dbReference>
<dbReference type="InterPro" id="IPR008916">
    <property type="entry name" value="Retrov_capsid_C"/>
</dbReference>
<dbReference type="InterPro" id="IPR008919">
    <property type="entry name" value="Retrov_capsid_N"/>
</dbReference>
<dbReference type="InterPro" id="IPR010999">
    <property type="entry name" value="Retrovr_matrix"/>
</dbReference>
<dbReference type="InterPro" id="IPR001878">
    <property type="entry name" value="Znf_CCHC"/>
</dbReference>
<dbReference type="InterPro" id="IPR036875">
    <property type="entry name" value="Znf_CCHC_sf"/>
</dbReference>
<dbReference type="PANTHER" id="PTHR40389">
    <property type="entry name" value="ENDOGENOUS RETROVIRUS GROUP K MEMBER 24 GAG POLYPROTEIN-RELATED"/>
    <property type="match status" value="1"/>
</dbReference>
<dbReference type="PANTHER" id="PTHR40389:SF2">
    <property type="entry name" value="ENDOGENOUS RETROVIRUS GROUP K MEMBER 24 GAG POLYPROTEIN-RELATED"/>
    <property type="match status" value="1"/>
</dbReference>
<dbReference type="Pfam" id="PF08723">
    <property type="entry name" value="Gag_p15"/>
    <property type="match status" value="1"/>
</dbReference>
<dbReference type="Pfam" id="PF19317">
    <property type="entry name" value="Gag_p24_C"/>
    <property type="match status" value="1"/>
</dbReference>
<dbReference type="Pfam" id="PF00098">
    <property type="entry name" value="zf-CCHC"/>
    <property type="match status" value="2"/>
</dbReference>
<dbReference type="SMART" id="SM00343">
    <property type="entry name" value="ZnF_C2HC"/>
    <property type="match status" value="2"/>
</dbReference>
<dbReference type="SUPFAM" id="SSF47836">
    <property type="entry name" value="Retroviral matrix proteins"/>
    <property type="match status" value="1"/>
</dbReference>
<dbReference type="SUPFAM" id="SSF47353">
    <property type="entry name" value="Retrovirus capsid dimerization domain-like"/>
    <property type="match status" value="1"/>
</dbReference>
<dbReference type="SUPFAM" id="SSF47943">
    <property type="entry name" value="Retrovirus capsid protein, N-terminal core domain"/>
    <property type="match status" value="1"/>
</dbReference>
<dbReference type="SUPFAM" id="SSF57756">
    <property type="entry name" value="Retrovirus zinc finger-like domains"/>
    <property type="match status" value="1"/>
</dbReference>
<dbReference type="PROSITE" id="PS50158">
    <property type="entry name" value="ZF_CCHC"/>
    <property type="match status" value="2"/>
</dbReference>
<feature type="chain" id="PRO_0000038780" description="Matrix protein p15">
    <location>
        <begin position="1"/>
        <end position="124"/>
    </location>
</feature>
<feature type="chain" id="PRO_0000038781" description="Capsid protein p26">
    <location>
        <begin position="125"/>
        <end position="354"/>
    </location>
</feature>
<feature type="peptide" id="PRO_0000272315" description="p1" evidence="2">
    <location>
        <begin position="355"/>
        <end position="359"/>
    </location>
</feature>
<feature type="chain" id="PRO_0000038782" description="Nucleocapsid protein p11">
    <location>
        <begin position="360"/>
        <end position="435"/>
    </location>
</feature>
<feature type="chain" id="PRO_0000038783" description="p9">
    <location>
        <begin position="436"/>
        <end position="486"/>
    </location>
</feature>
<feature type="zinc finger region" description="CCHC-type 1" evidence="3">
    <location>
        <begin position="381"/>
        <end position="398"/>
    </location>
</feature>
<feature type="zinc finger region" description="CCHC-type 2" evidence="3">
    <location>
        <begin position="400"/>
        <end position="417"/>
    </location>
</feature>
<feature type="region of interest" description="Disordered" evidence="4">
    <location>
        <begin position="414"/>
        <end position="460"/>
    </location>
</feature>
<feature type="short sequence motif" description="LYPX(n)L motif">
    <location>
        <begin position="457"/>
        <end position="461"/>
    </location>
</feature>
<feature type="compositionally biased region" description="Polar residues" evidence="4">
    <location>
        <begin position="430"/>
        <end position="457"/>
    </location>
</feature>
<feature type="disulfide bond">
    <location>
        <begin position="322"/>
        <end position="342"/>
    </location>
</feature>
<feature type="helix" evidence="7">
    <location>
        <begin position="7"/>
        <end position="16"/>
    </location>
</feature>
<feature type="strand" evidence="7">
    <location>
        <begin position="20"/>
        <end position="22"/>
    </location>
</feature>
<feature type="strand" evidence="11">
    <location>
        <begin position="27"/>
        <end position="29"/>
    </location>
</feature>
<feature type="turn" evidence="7">
    <location>
        <begin position="45"/>
        <end position="47"/>
    </location>
</feature>
<feature type="helix" evidence="7">
    <location>
        <begin position="53"/>
        <end position="64"/>
    </location>
</feature>
<feature type="helix" evidence="7">
    <location>
        <begin position="71"/>
        <end position="86"/>
    </location>
</feature>
<feature type="strand" evidence="7">
    <location>
        <begin position="92"/>
        <end position="95"/>
    </location>
</feature>
<feature type="helix" evidence="7">
    <location>
        <begin position="98"/>
        <end position="108"/>
    </location>
</feature>
<feature type="helix" evidence="6">
    <location>
        <begin position="146"/>
        <end position="152"/>
    </location>
</feature>
<feature type="turn" evidence="6">
    <location>
        <begin position="153"/>
        <end position="157"/>
    </location>
</feature>
<feature type="helix" evidence="6">
    <location>
        <begin position="159"/>
        <end position="168"/>
    </location>
</feature>
<feature type="turn" evidence="6">
    <location>
        <begin position="169"/>
        <end position="171"/>
    </location>
</feature>
<feature type="helix" evidence="6">
    <location>
        <begin position="174"/>
        <end position="183"/>
    </location>
</feature>
<feature type="helix" evidence="6">
    <location>
        <begin position="188"/>
        <end position="208"/>
    </location>
</feature>
<feature type="strand" evidence="6">
    <location>
        <begin position="220"/>
        <end position="222"/>
    </location>
</feature>
<feature type="helix" evidence="6">
    <location>
        <begin position="228"/>
        <end position="231"/>
    </location>
</feature>
<feature type="turn" evidence="9">
    <location>
        <begin position="232"/>
        <end position="235"/>
    </location>
</feature>
<feature type="helix" evidence="6">
    <location>
        <begin position="238"/>
        <end position="242"/>
    </location>
</feature>
<feature type="helix" evidence="6">
    <location>
        <begin position="244"/>
        <end position="246"/>
    </location>
</feature>
<feature type="helix" evidence="6">
    <location>
        <begin position="247"/>
        <end position="269"/>
    </location>
</feature>
<feature type="helix" evidence="6">
    <location>
        <begin position="274"/>
        <end position="276"/>
    </location>
</feature>
<feature type="helix" evidence="6">
    <location>
        <begin position="285"/>
        <end position="297"/>
    </location>
</feature>
<feature type="helix" evidence="6">
    <location>
        <begin position="305"/>
        <end position="316"/>
    </location>
</feature>
<feature type="helix" evidence="6">
    <location>
        <begin position="320"/>
        <end position="325"/>
    </location>
</feature>
<feature type="turn" evidence="6">
    <location>
        <begin position="326"/>
        <end position="328"/>
    </location>
</feature>
<feature type="helix" evidence="6">
    <location>
        <begin position="335"/>
        <end position="341"/>
    </location>
</feature>
<feature type="turn" evidence="6">
    <location>
        <begin position="342"/>
        <end position="344"/>
    </location>
</feature>
<feature type="strand" evidence="8">
    <location>
        <begin position="383"/>
        <end position="386"/>
    </location>
</feature>
<feature type="turn" evidence="8">
    <location>
        <begin position="393"/>
        <end position="395"/>
    </location>
</feature>
<feature type="helix" evidence="8">
    <location>
        <begin position="410"/>
        <end position="413"/>
    </location>
</feature>
<feature type="strand" evidence="10">
    <location>
        <begin position="463"/>
        <end position="465"/>
    </location>
</feature>
<feature type="helix" evidence="10">
    <location>
        <begin position="466"/>
        <end position="470"/>
    </location>
</feature>
<feature type="turn" evidence="10">
    <location>
        <begin position="471"/>
        <end position="476"/>
    </location>
</feature>
<feature type="helix" evidence="10">
    <location>
        <begin position="477"/>
        <end position="479"/>
    </location>
</feature>
<feature type="turn" evidence="10">
    <location>
        <begin position="480"/>
        <end position="482"/>
    </location>
</feature>
<protein>
    <recommendedName>
        <fullName>Gag polyprotein</fullName>
    </recommendedName>
    <component>
        <recommendedName>
            <fullName>Matrix protein p15</fullName>
            <shortName>MA</shortName>
        </recommendedName>
    </component>
    <component>
        <recommendedName>
            <fullName>Capsid protein p26</fullName>
            <shortName>CA</shortName>
        </recommendedName>
    </component>
    <component>
        <recommendedName>
            <fullName>p1</fullName>
        </recommendedName>
    </component>
    <component>
        <recommendedName>
            <fullName>Nucleocapsid protein p11</fullName>
            <shortName>NC</shortName>
        </recommendedName>
    </component>
    <component>
        <recommendedName>
            <fullName>p9</fullName>
        </recommendedName>
    </component>
</protein>
<organismHost>
    <name type="scientific">Equus asinus</name>
    <name type="common">Donkey</name>
    <name type="synonym">Equus africanus asinus</name>
    <dbReference type="NCBI Taxonomy" id="9793"/>
</organismHost>
<organismHost>
    <name type="scientific">Equus caballus</name>
    <name type="common">Horse</name>
    <dbReference type="NCBI Taxonomy" id="9796"/>
</organismHost>
<accession>P69732</accession>
<accession>P03351</accession>
<evidence type="ECO:0000250" key="1"/>
<evidence type="ECO:0000255" key="2"/>
<evidence type="ECO:0000255" key="3">
    <source>
        <dbReference type="PROSITE-ProRule" id="PRU00047"/>
    </source>
</evidence>
<evidence type="ECO:0000256" key="4">
    <source>
        <dbReference type="SAM" id="MobiDB-lite"/>
    </source>
</evidence>
<evidence type="ECO:0000305" key="5"/>
<evidence type="ECO:0007829" key="6">
    <source>
        <dbReference type="PDB" id="1EIA"/>
    </source>
</evidence>
<evidence type="ECO:0007829" key="7">
    <source>
        <dbReference type="PDB" id="1HEK"/>
    </source>
</evidence>
<evidence type="ECO:0007829" key="8">
    <source>
        <dbReference type="PDB" id="2BL6"/>
    </source>
</evidence>
<evidence type="ECO:0007829" key="9">
    <source>
        <dbReference type="PDB" id="2EIA"/>
    </source>
</evidence>
<evidence type="ECO:0007829" key="10">
    <source>
        <dbReference type="PDB" id="2K84"/>
    </source>
</evidence>
<evidence type="ECO:0007829" key="11">
    <source>
        <dbReference type="PDB" id="4ZUW"/>
    </source>
</evidence>
<proteinExistence type="evidence at protein level"/>
<keyword id="KW-0002">3D-structure</keyword>
<keyword id="KW-0167">Capsid protein</keyword>
<keyword id="KW-1015">Disulfide bond</keyword>
<keyword id="KW-0945">Host-virus interaction</keyword>
<keyword id="KW-0479">Metal-binding</keyword>
<keyword id="KW-0677">Repeat</keyword>
<keyword id="KW-1198">Viral budding</keyword>
<keyword id="KW-1187">Viral budding via the host ESCRT complexes</keyword>
<keyword id="KW-0468">Viral matrix protein</keyword>
<keyword id="KW-0543">Viral nucleoprotein</keyword>
<keyword id="KW-1188">Viral release from host cell</keyword>
<keyword id="KW-0946">Virion</keyword>
<keyword id="KW-0862">Zinc</keyword>
<keyword id="KW-0863">Zinc-finger</keyword>
<reference key="1">
    <citation type="journal article" date="1986" name="Science">
        <title>Equine infectious anemia virus gag and pol genes: relatedness to visna and AIDS virus.</title>
        <authorList>
            <person name="Stephens R.M."/>
            <person name="Casey J.W."/>
            <person name="Rice N.R."/>
        </authorList>
    </citation>
    <scope>NUCLEOTIDE SEQUENCE [GENOMIC RNA]</scope>
</reference>
<reference key="2">
    <citation type="journal article" date="1997" name="Biochim. Biophys. Acta">
        <title>Cloning, expression, purification, and characterization of the major core protein (p26) from equine infectious anemia virus.</title>
        <authorList>
            <person name="Birkett A.J."/>
            <person name="Yelamos B."/>
            <person name="Rodriguez-Crespo I."/>
            <person name="Gavilanes F."/>
            <person name="Peterson D.L."/>
        </authorList>
    </citation>
    <scope>CHARACTERIZATION OF P26</scope>
</reference>
<reference key="3">
    <citation type="journal article" date="1999" name="J. Mol. Biol.">
        <title>Model for lentivirus capsid core assembly based on crystal dimers of EIAV p26.</title>
        <authorList>
            <person name="Jin Z."/>
            <person name="Jin L."/>
            <person name="Peterson D.L."/>
            <person name="Lawson C.L."/>
        </authorList>
    </citation>
    <scope>X-RAY CRYSTALLOGRAPHY (2.7 ANGSTROMS) OF P26</scope>
</reference>